<name>COPB_MOUSE</name>
<keyword id="KW-0002">3D-structure</keyword>
<keyword id="KW-0007">Acetylation</keyword>
<keyword id="KW-1003">Cell membrane</keyword>
<keyword id="KW-0963">Cytoplasm</keyword>
<keyword id="KW-0968">Cytoplasmic vesicle</keyword>
<keyword id="KW-0931">ER-Golgi transport</keyword>
<keyword id="KW-0333">Golgi apparatus</keyword>
<keyword id="KW-0472">Membrane</keyword>
<keyword id="KW-0653">Protein transport</keyword>
<keyword id="KW-1185">Reference proteome</keyword>
<keyword id="KW-0677">Repeat</keyword>
<keyword id="KW-0813">Transport</keyword>
<organism>
    <name type="scientific">Mus musculus</name>
    <name type="common">Mouse</name>
    <dbReference type="NCBI Taxonomy" id="10090"/>
    <lineage>
        <taxon>Eukaryota</taxon>
        <taxon>Metazoa</taxon>
        <taxon>Chordata</taxon>
        <taxon>Craniata</taxon>
        <taxon>Vertebrata</taxon>
        <taxon>Euteleostomi</taxon>
        <taxon>Mammalia</taxon>
        <taxon>Eutheria</taxon>
        <taxon>Euarchontoglires</taxon>
        <taxon>Glires</taxon>
        <taxon>Rodentia</taxon>
        <taxon>Myomorpha</taxon>
        <taxon>Muroidea</taxon>
        <taxon>Muridae</taxon>
        <taxon>Murinae</taxon>
        <taxon>Mus</taxon>
        <taxon>Mus</taxon>
    </lineage>
</organism>
<sequence length="953" mass="107066">MTAAENVCYTLINVPMDSEPPSEISLKNDLEKGDVKSKTEALKKVIIMILNGEKLPGLLMTIIRFVLPLQDHTIKKLLLVFWEIVPKTTPDGRLLHEMILVCDAYRKDLQHPNEFIRGSTLRFLCKLKEAELLEPLMPAIRACLEHRHSYVRRNAVLAIYTIYRNFEHLIPDAPELIHDFLVNEKDASCKRNAFMMLIHADQDRALDYLSTCIDQVQTFGDILQLVIVELIYKVCHANPSERARFIRCIYNLLQSSSPAVKYEAAGTLVTLSSAPTAIKAAAQCYIDLIIKESDNNVKLIVLDRLVELKEHPAHERVLQDLVMDILRVLSTPDLEVRKKTLQLALDLVSSRNVEELVIVLKKEVIKTNNVSEHEDTDKYRQLLVRTLHSCSVRFPDMAANVIPVLMEFLSDSNEAAAADVLEFVREAIQRFDNLRMLIVEKMLEVFHAIKSVKIYRGALWILGEYCSTKEDIQSVMTEVRRSLGEIPIVESEIKKEAGELKPEEEITVGPVQKLVTEMGTYATQSALSSSRPTKKEEDRPPLRGFLLDGDFFVAASLATTLTKIALRYVALVQEKKKQNSFVAEAMLLMATILHLGKSSLPKKPITDDDVDRISLCLKVLSECSPLMNDIFNKECRQSLSQMLSAKLEEEKLSQKKESEKRNVTVQPDDPISFMQLTAKNEMNCKEDQFQLSLLAAMGNTQRKEAADPLASKLNKVTQLTGFSDPVYAEAYVHVNQYDIVLDVLVVNQTSDTLQNCTLELATLGDLKLVEKPSPLTLAPHDFANIKANVKVASTENGIIFGNIVYDVSGAASDRNCVVLSDIHIDIMDYIQPATCTDAEFRQMWAEFEWENKVTVNTNMTDLNDYLQHILKSTNMKCLTPEKALSGYCGFMAANLYARSIFGEDALANVSIEKPVHQGPDAAVTGHIRIRAKSQGMALSLGDKINLSQKKTSL</sequence>
<comment type="function">
    <text evidence="1 6 7">The coatomer is a cytosolic protein complex that binds to dilysine motifs and reversibly associates with Golgi non-clathrin-coated vesicles, which further mediate biosynthetic protein transport from the ER, via the Golgi up to the trans Golgi network. Coatomer complex is required for budding from Golgi membranes, and is essential for the retrograde Golgi-to-ER transport of dilysine-tagged proteins. In mammals, the coatomer can only be recruited by membranes associated to ADP-ribosylation factors (ARFs), which are small GTP-binding proteins; the complex also influences the Golgi structural integrity, as well as the processing, activity, and endocytic recycling of LDL receptors. Involved in the Golgi disassembly and reassembly processes during cell cycle. Involved in autophagy by playing a role in early endosome function. Plays a role in organellar compartmentalization of secretory compartments including endoplasmic reticulum (ER)-Golgi intermediate compartment (ERGIC), Golgi, trans-Golgi network (TGN) and recycling endosomes, and in biosynthetic transport of CAV1 (By similarity). Plays a functional role in facilitating the transport of kappa-type opioid receptor mRNAs into axons and enhances translation of these proteins in cortical neurons. Required for limiting lipid storage in lipid droplets. Involved in lipid homeostasis by regulating the presence of perilipin family members PLIN2 and PLIN3 at the lipid droplet surface and promoting the association of adipocyte triglyceride lipase (PNPLA2) with the lipid droplet surface to mediate lipolysis.</text>
</comment>
<comment type="subunit">
    <text evidence="2 3">Oligomeric complex that consists of at least the alpha, beta, beta', gamma, delta, epsilon and zeta subunits (By similarity). Interacts with CAPN8. Interacts with SCYL1 and PRKCE (By similarity). Interacts with COPG1 (By similarity). Interacts with ARF1 (myristoylated); this interaction is required for binding of COPB1 to Golgi membranes (By similarity). Interacts (via trunk domain) with ARF1 (via switch I region); the interaction is direct (By similarity). Interacts with KCNK2 (via N-terminus); this interaction increases the channel-mediated whole cell currents and promotes plasma membrane expression of KCNK2 (By similarity). Interacts with STX17 (By similarity). Interacts with TMEM115 (By similarity). Interacts with TMEM41B (By similarity).</text>
</comment>
<comment type="subcellular location">
    <subcellularLocation>
        <location evidence="2">Cytoplasm</location>
    </subcellularLocation>
    <subcellularLocation>
        <location evidence="5 8 9">Golgi apparatus membrane</location>
        <topology evidence="3">Peripheral membrane protein</topology>
        <orientation evidence="10">Cytoplasmic side</orientation>
    </subcellularLocation>
    <subcellularLocation>
        <location evidence="9">Cytoplasmic vesicle</location>
        <location evidence="9">COPI-coated vesicle membrane</location>
        <topology evidence="10">Peripheral membrane protein</topology>
        <orientation evidence="10">Cytoplasmic side</orientation>
    </subcellularLocation>
    <subcellularLocation>
        <location evidence="3">Cell membrane</location>
    </subcellularLocation>
    <subcellularLocation>
        <location evidence="9">Endoplasmic reticulum-Golgi intermediate compartment</location>
    </subcellularLocation>
    <text evidence="2 5">The coatomer is cytoplasmic or polymerized on the cytoplasmic side of the Golgi, as well as on the vesicles/buds originating from it (By similarity). Proteolytic cleavage by CAPN8 triggers translocation from Golgi to cytoplasm (PubMed:16476741). Found in perinuclear vesicular-tubular clusters (VTCs) and in the Golgi region where associated with vesicles, buds and rims of the Golgi stack (By similarity). Occasionally present at the trans-side of Golgi, but mainly present at the cis- Golgi side in transitional areas (TA), on so-called peripheral elements (PE) consisting of tubules and vesicles located between the cup-shaped transitional elements (TE) of the rough endoplasmic reticulum (RER) and the cis-most Golgi cisternae (By similarity). Present in cytoplasm, not associated with visible coats or membranes, with a minor fraction present on small clusters of tubules and vesicles (By similarity). Some association with high-density and low-density microsomes and mitochondria/nuclei fraction (By similarity). Very little found in plasma membrane fraction (By similarity).</text>
</comment>
<comment type="tissue specificity">
    <text evidence="4 5">Predominantly expressed in the upper one-third of the oxyntic mucosa and in most regions of the pyloric mucosa (PubMed:16476741). Ubiquitously expressed including platelet, liver, heart, spleen, lung and kidney (PubMed:11441537).</text>
</comment>
<comment type="PTM">
    <text>Proteolytically cleaved between Ser-528 and Ser-529 by CAPN8.</text>
</comment>
<comment type="miscellaneous">
    <text>Brefeldin A induces dissociation from the Golgi of the beta-COP and presumably the other coatomer subunits.</text>
</comment>
<feature type="initiator methionine" description="Removed" evidence="3">
    <location>
        <position position="1"/>
    </location>
</feature>
<feature type="chain" id="PRO_0000193834" description="Coatomer subunit beta">
    <location>
        <begin position="2"/>
        <end position="953"/>
    </location>
</feature>
<feature type="repeat" description="HEAT 1">
    <location>
        <begin position="96"/>
        <end position="131"/>
    </location>
</feature>
<feature type="repeat" description="HEAT 2">
    <location>
        <begin position="132"/>
        <end position="168"/>
    </location>
</feature>
<feature type="repeat" description="HEAT 3">
    <location>
        <begin position="240"/>
        <end position="276"/>
    </location>
</feature>
<feature type="repeat" description="HEAT 4">
    <location>
        <begin position="277"/>
        <end position="314"/>
    </location>
</feature>
<feature type="repeat" description="HEAT 5">
    <location>
        <begin position="316"/>
        <end position="353"/>
    </location>
</feature>
<feature type="repeat" description="HEAT 6">
    <location>
        <begin position="396"/>
        <end position="433"/>
    </location>
</feature>
<feature type="modified residue" description="N-acetylthreonine" evidence="3">
    <location>
        <position position="2"/>
    </location>
</feature>
<feature type="modified residue" description="N6-acetyllysine" evidence="11">
    <location>
        <position position="494"/>
    </location>
</feature>
<feature type="sequence conflict" description="In Ref. 2; BAE29109." evidence="10" ref="2">
    <original>T</original>
    <variation>I</variation>
    <location>
        <position position="757"/>
    </location>
</feature>
<accession>Q9JIF7</accession>
<accession>Q3T9Y4</accession>
<accession>Q3TT72</accession>
<accession>Q3U8G9</accession>
<accession>Q3UE02</accession>
<reference key="1">
    <citation type="journal article" date="1999" name="Somat. Cell Mol. Genet.">
        <title>cDNA sequence and mapping of the mouse Copb gene encoding the beta subunit of the COPI coatomer complex.</title>
        <authorList>
            <person name="Li W."/>
            <person name="Elliott R.W."/>
            <person name="Novak E.K."/>
            <person name="Swank R.T."/>
        </authorList>
    </citation>
    <scope>NUCLEOTIDE SEQUENCE [MRNA]</scope>
    <scope>TISSUE SPECIFICITY</scope>
    <source>
        <strain>C57BL/6J</strain>
        <tissue>Bone marrow</tissue>
    </source>
</reference>
<reference key="2">
    <citation type="journal article" date="2005" name="Science">
        <title>The transcriptional landscape of the mammalian genome.</title>
        <authorList>
            <person name="Carninci P."/>
            <person name="Kasukawa T."/>
            <person name="Katayama S."/>
            <person name="Gough J."/>
            <person name="Frith M.C."/>
            <person name="Maeda N."/>
            <person name="Oyama R."/>
            <person name="Ravasi T."/>
            <person name="Lenhard B."/>
            <person name="Wells C."/>
            <person name="Kodzius R."/>
            <person name="Shimokawa K."/>
            <person name="Bajic V.B."/>
            <person name="Brenner S.E."/>
            <person name="Batalov S."/>
            <person name="Forrest A.R."/>
            <person name="Zavolan M."/>
            <person name="Davis M.J."/>
            <person name="Wilming L.G."/>
            <person name="Aidinis V."/>
            <person name="Allen J.E."/>
            <person name="Ambesi-Impiombato A."/>
            <person name="Apweiler R."/>
            <person name="Aturaliya R.N."/>
            <person name="Bailey T.L."/>
            <person name="Bansal M."/>
            <person name="Baxter L."/>
            <person name="Beisel K.W."/>
            <person name="Bersano T."/>
            <person name="Bono H."/>
            <person name="Chalk A.M."/>
            <person name="Chiu K.P."/>
            <person name="Choudhary V."/>
            <person name="Christoffels A."/>
            <person name="Clutterbuck D.R."/>
            <person name="Crowe M.L."/>
            <person name="Dalla E."/>
            <person name="Dalrymple B.P."/>
            <person name="de Bono B."/>
            <person name="Della Gatta G."/>
            <person name="di Bernardo D."/>
            <person name="Down T."/>
            <person name="Engstrom P."/>
            <person name="Fagiolini M."/>
            <person name="Faulkner G."/>
            <person name="Fletcher C.F."/>
            <person name="Fukushima T."/>
            <person name="Furuno M."/>
            <person name="Futaki S."/>
            <person name="Gariboldi M."/>
            <person name="Georgii-Hemming P."/>
            <person name="Gingeras T.R."/>
            <person name="Gojobori T."/>
            <person name="Green R.E."/>
            <person name="Gustincich S."/>
            <person name="Harbers M."/>
            <person name="Hayashi Y."/>
            <person name="Hensch T.K."/>
            <person name="Hirokawa N."/>
            <person name="Hill D."/>
            <person name="Huminiecki L."/>
            <person name="Iacono M."/>
            <person name="Ikeo K."/>
            <person name="Iwama A."/>
            <person name="Ishikawa T."/>
            <person name="Jakt M."/>
            <person name="Kanapin A."/>
            <person name="Katoh M."/>
            <person name="Kawasawa Y."/>
            <person name="Kelso J."/>
            <person name="Kitamura H."/>
            <person name="Kitano H."/>
            <person name="Kollias G."/>
            <person name="Krishnan S.P."/>
            <person name="Kruger A."/>
            <person name="Kummerfeld S.K."/>
            <person name="Kurochkin I.V."/>
            <person name="Lareau L.F."/>
            <person name="Lazarevic D."/>
            <person name="Lipovich L."/>
            <person name="Liu J."/>
            <person name="Liuni S."/>
            <person name="McWilliam S."/>
            <person name="Madan Babu M."/>
            <person name="Madera M."/>
            <person name="Marchionni L."/>
            <person name="Matsuda H."/>
            <person name="Matsuzawa S."/>
            <person name="Miki H."/>
            <person name="Mignone F."/>
            <person name="Miyake S."/>
            <person name="Morris K."/>
            <person name="Mottagui-Tabar S."/>
            <person name="Mulder N."/>
            <person name="Nakano N."/>
            <person name="Nakauchi H."/>
            <person name="Ng P."/>
            <person name="Nilsson R."/>
            <person name="Nishiguchi S."/>
            <person name="Nishikawa S."/>
            <person name="Nori F."/>
            <person name="Ohara O."/>
            <person name="Okazaki Y."/>
            <person name="Orlando V."/>
            <person name="Pang K.C."/>
            <person name="Pavan W.J."/>
            <person name="Pavesi G."/>
            <person name="Pesole G."/>
            <person name="Petrovsky N."/>
            <person name="Piazza S."/>
            <person name="Reed J."/>
            <person name="Reid J.F."/>
            <person name="Ring B.Z."/>
            <person name="Ringwald M."/>
            <person name="Rost B."/>
            <person name="Ruan Y."/>
            <person name="Salzberg S.L."/>
            <person name="Sandelin A."/>
            <person name="Schneider C."/>
            <person name="Schoenbach C."/>
            <person name="Sekiguchi K."/>
            <person name="Semple C.A."/>
            <person name="Seno S."/>
            <person name="Sessa L."/>
            <person name="Sheng Y."/>
            <person name="Shibata Y."/>
            <person name="Shimada H."/>
            <person name="Shimada K."/>
            <person name="Silva D."/>
            <person name="Sinclair B."/>
            <person name="Sperling S."/>
            <person name="Stupka E."/>
            <person name="Sugiura K."/>
            <person name="Sultana R."/>
            <person name="Takenaka Y."/>
            <person name="Taki K."/>
            <person name="Tammoja K."/>
            <person name="Tan S.L."/>
            <person name="Tang S."/>
            <person name="Taylor M.S."/>
            <person name="Tegner J."/>
            <person name="Teichmann S.A."/>
            <person name="Ueda H.R."/>
            <person name="van Nimwegen E."/>
            <person name="Verardo R."/>
            <person name="Wei C.L."/>
            <person name="Yagi K."/>
            <person name="Yamanishi H."/>
            <person name="Zabarovsky E."/>
            <person name="Zhu S."/>
            <person name="Zimmer A."/>
            <person name="Hide W."/>
            <person name="Bult C."/>
            <person name="Grimmond S.M."/>
            <person name="Teasdale R.D."/>
            <person name="Liu E.T."/>
            <person name="Brusic V."/>
            <person name="Quackenbush J."/>
            <person name="Wahlestedt C."/>
            <person name="Mattick J.S."/>
            <person name="Hume D.A."/>
            <person name="Kai C."/>
            <person name="Sasaki D."/>
            <person name="Tomaru Y."/>
            <person name="Fukuda S."/>
            <person name="Kanamori-Katayama M."/>
            <person name="Suzuki M."/>
            <person name="Aoki J."/>
            <person name="Arakawa T."/>
            <person name="Iida J."/>
            <person name="Imamura K."/>
            <person name="Itoh M."/>
            <person name="Kato T."/>
            <person name="Kawaji H."/>
            <person name="Kawagashira N."/>
            <person name="Kawashima T."/>
            <person name="Kojima M."/>
            <person name="Kondo S."/>
            <person name="Konno H."/>
            <person name="Nakano K."/>
            <person name="Ninomiya N."/>
            <person name="Nishio T."/>
            <person name="Okada M."/>
            <person name="Plessy C."/>
            <person name="Shibata K."/>
            <person name="Shiraki T."/>
            <person name="Suzuki S."/>
            <person name="Tagami M."/>
            <person name="Waki K."/>
            <person name="Watahiki A."/>
            <person name="Okamura-Oho Y."/>
            <person name="Suzuki H."/>
            <person name="Kawai J."/>
            <person name="Hayashizaki Y."/>
        </authorList>
    </citation>
    <scope>NUCLEOTIDE SEQUENCE [LARGE SCALE MRNA]</scope>
    <source>
        <strain>C57BL/6J</strain>
        <strain>NOD</strain>
        <tissue>Bone marrow</tissue>
        <tissue>Pituitary</tissue>
        <tissue>Spleen</tissue>
    </source>
</reference>
<reference key="3">
    <citation type="submission" date="2005-07" db="EMBL/GenBank/DDBJ databases">
        <authorList>
            <person name="Mural R.J."/>
            <person name="Adams M.D."/>
            <person name="Myers E.W."/>
            <person name="Smith H.O."/>
            <person name="Venter J.C."/>
        </authorList>
    </citation>
    <scope>NUCLEOTIDE SEQUENCE [LARGE SCALE GENOMIC DNA]</scope>
</reference>
<reference key="4">
    <citation type="journal article" date="2004" name="Genome Res.">
        <title>The status, quality, and expansion of the NIH full-length cDNA project: the Mammalian Gene Collection (MGC).</title>
        <authorList>
            <consortium name="The MGC Project Team"/>
        </authorList>
    </citation>
    <scope>NUCLEOTIDE SEQUENCE [LARGE SCALE MRNA]</scope>
    <source>
        <strain>Czech II</strain>
        <tissue>Mammary gland</tissue>
    </source>
</reference>
<reference key="5">
    <citation type="journal article" date="1995" name="J. Cell Sci.">
        <title>Immunocytochemical localization of beta-COP to the ER-Golgi boundary and the TGN.</title>
        <authorList>
            <person name="Griffiths G."/>
            <person name="Pepperkok R."/>
            <person name="Locker J.K."/>
            <person name="Kreis T.E."/>
        </authorList>
    </citation>
    <scope>SUBCELLULAR LOCATION</scope>
</reference>
<reference key="6">
    <citation type="journal article" date="2006" name="J. Biol. Chem.">
        <title>Stomach-specific calpain, nCL-2, localizes in mucus cells and proteolyzes the beta-subunit of coatomer complex, beta-COP.</title>
        <authorList>
            <person name="Hata S."/>
            <person name="Koyama S."/>
            <person name="Kawahara H."/>
            <person name="Doi N."/>
            <person name="Maeda T."/>
            <person name="Toyama-Sorimachi N."/>
            <person name="Abe K."/>
            <person name="Suzuki K."/>
            <person name="Sorimachi H."/>
        </authorList>
    </citation>
    <scope>INTERACTION WITH CAPN8</scope>
    <scope>SUBCELLULAR LOCATION</scope>
    <scope>PTM</scope>
    <scope>TISSUE SPECIFICITY</scope>
</reference>
<reference key="7">
    <citation type="journal article" date="2007" name="Proc. Natl. Acad. Sci. U.S.A.">
        <title>Copb1-facilitated axonal transport and translation of kappa opioid-receptor mRNA.</title>
        <authorList>
            <person name="Bi J."/>
            <person name="Tsai N.P."/>
            <person name="Lu H.Y."/>
            <person name="Loh H.H."/>
            <person name="Wei L.N."/>
        </authorList>
    </citation>
    <scope>FUNCTION</scope>
</reference>
<reference key="8">
    <citation type="journal article" date="2008" name="PLoS Biol.">
        <title>COPI complex is a regulator of lipid homeostasis.</title>
        <authorList>
            <person name="Beller M."/>
            <person name="Sztalryd C."/>
            <person name="Southall N."/>
            <person name="Bell M."/>
            <person name="Jackle H."/>
            <person name="Auld D.S."/>
            <person name="Oliver B."/>
        </authorList>
    </citation>
    <scope>FUNCTION</scope>
</reference>
<reference key="9">
    <citation type="journal article" date="2009" name="J. Dent. Res.">
        <title>Novel Golgi protein, GoPro49, is a specific dental follicle marker.</title>
        <authorList>
            <person name="Takatalo M.S."/>
            <person name="Tummers M."/>
            <person name="Thesleff I."/>
            <person name="Roennholm R."/>
        </authorList>
    </citation>
    <scope>SUBCELLULAR LOCATION</scope>
</reference>
<reference key="10">
    <citation type="journal article" date="2010" name="Cell">
        <title>A tissue-specific atlas of mouse protein phosphorylation and expression.</title>
        <authorList>
            <person name="Huttlin E.L."/>
            <person name="Jedrychowski M.P."/>
            <person name="Elias J.E."/>
            <person name="Goswami T."/>
            <person name="Rad R."/>
            <person name="Beausoleil S.A."/>
            <person name="Villen J."/>
            <person name="Haas W."/>
            <person name="Sowa M.E."/>
            <person name="Gygi S.P."/>
        </authorList>
    </citation>
    <scope>IDENTIFICATION BY MASS SPECTROMETRY [LARGE SCALE ANALYSIS]</scope>
    <source>
        <tissue>Brain</tissue>
        <tissue>Brown adipose tissue</tissue>
        <tissue>Heart</tissue>
        <tissue>Kidney</tissue>
        <tissue>Liver</tissue>
        <tissue>Lung</tissue>
        <tissue>Pancreas</tissue>
        <tissue>Spleen</tissue>
        <tissue>Testis</tissue>
    </source>
</reference>
<reference key="11">
    <citation type="journal article" date="2013" name="Mol. Cell">
        <title>SIRT5-mediated lysine desuccinylation impacts diverse metabolic pathways.</title>
        <authorList>
            <person name="Park J."/>
            <person name="Chen Y."/>
            <person name="Tishkoff D.X."/>
            <person name="Peng C."/>
            <person name="Tan M."/>
            <person name="Dai L."/>
            <person name="Xie Z."/>
            <person name="Zhang Y."/>
            <person name="Zwaans B.M."/>
            <person name="Skinner M.E."/>
            <person name="Lombard D.B."/>
            <person name="Zhao Y."/>
        </authorList>
    </citation>
    <scope>ACETYLATION [LARGE SCALE ANALYSIS] AT LYS-494</scope>
    <scope>IDENTIFICATION BY MASS SPECTROMETRY [LARGE SCALE ANALYSIS]</scope>
    <source>
        <tissue>Embryonic fibroblast</tissue>
    </source>
</reference>
<proteinExistence type="evidence at protein level"/>
<dbReference type="EMBL" id="AF231925">
    <property type="protein sequence ID" value="AAF76856.1"/>
    <property type="molecule type" value="mRNA"/>
</dbReference>
<dbReference type="EMBL" id="AK149828">
    <property type="protein sequence ID" value="BAE29109.1"/>
    <property type="molecule type" value="mRNA"/>
</dbReference>
<dbReference type="EMBL" id="AK152222">
    <property type="protein sequence ID" value="BAE31049.1"/>
    <property type="molecule type" value="mRNA"/>
</dbReference>
<dbReference type="EMBL" id="AK161544">
    <property type="protein sequence ID" value="BAE36453.1"/>
    <property type="molecule type" value="mRNA"/>
</dbReference>
<dbReference type="EMBL" id="AK172214">
    <property type="protein sequence ID" value="BAE42886.1"/>
    <property type="molecule type" value="mRNA"/>
</dbReference>
<dbReference type="EMBL" id="CH466531">
    <property type="protein sequence ID" value="EDL17060.1"/>
    <property type="molecule type" value="Genomic_DNA"/>
</dbReference>
<dbReference type="EMBL" id="BC030837">
    <property type="protein sequence ID" value="AAH30837.1"/>
    <property type="molecule type" value="mRNA"/>
</dbReference>
<dbReference type="CCDS" id="CCDS21759.1"/>
<dbReference type="RefSeq" id="NP_203534.1">
    <property type="nucleotide sequence ID" value="NM_033370.3"/>
</dbReference>
<dbReference type="PDB" id="5A1U">
    <property type="method" value="EM"/>
    <property type="resolution" value="13.00 A"/>
    <property type="chains" value="G=1-953"/>
</dbReference>
<dbReference type="PDB" id="5A1V">
    <property type="method" value="EM"/>
    <property type="resolution" value="21.00 A"/>
    <property type="chains" value="G/O/X=1-953"/>
</dbReference>
<dbReference type="PDB" id="5A1W">
    <property type="method" value="EM"/>
    <property type="resolution" value="18.00 A"/>
    <property type="chains" value="G=1-953"/>
</dbReference>
<dbReference type="PDB" id="5A1X">
    <property type="method" value="EM"/>
    <property type="resolution" value="23.00 A"/>
    <property type="chains" value="G/O=1-953"/>
</dbReference>
<dbReference type="PDB" id="5A1Y">
    <property type="method" value="EM"/>
    <property type="resolution" value="21.00 A"/>
    <property type="chains" value="G/O=1-953"/>
</dbReference>
<dbReference type="PDB" id="5NZR">
    <property type="method" value="EM"/>
    <property type="resolution" value="9.20 A"/>
    <property type="chains" value="B=1-953"/>
</dbReference>
<dbReference type="PDB" id="5NZS">
    <property type="method" value="EM"/>
    <property type="resolution" value="10.10 A"/>
    <property type="chains" value="B=1-953"/>
</dbReference>
<dbReference type="PDB" id="5NZT">
    <property type="method" value="EM"/>
    <property type="resolution" value="17.00 A"/>
    <property type="chains" value="B/N=1-953"/>
</dbReference>
<dbReference type="PDB" id="5NZU">
    <property type="method" value="EM"/>
    <property type="resolution" value="15.00 A"/>
    <property type="chains" value="B=1-953"/>
</dbReference>
<dbReference type="PDB" id="5NZV">
    <property type="method" value="EM"/>
    <property type="resolution" value="17.30 A"/>
    <property type="chains" value="B/I=1-953"/>
</dbReference>
<dbReference type="PDBsum" id="5A1U"/>
<dbReference type="PDBsum" id="5A1V"/>
<dbReference type="PDBsum" id="5A1W"/>
<dbReference type="PDBsum" id="5A1X"/>
<dbReference type="PDBsum" id="5A1Y"/>
<dbReference type="PDBsum" id="5NZR"/>
<dbReference type="PDBsum" id="5NZS"/>
<dbReference type="PDBsum" id="5NZT"/>
<dbReference type="PDBsum" id="5NZU"/>
<dbReference type="PDBsum" id="5NZV"/>
<dbReference type="EMDB" id="EMD-3720"/>
<dbReference type="EMDB" id="EMD-3721"/>
<dbReference type="EMDB" id="EMD-3722"/>
<dbReference type="EMDB" id="EMD-3723"/>
<dbReference type="EMDB" id="EMD-3724"/>
<dbReference type="SMR" id="Q9JIF7"/>
<dbReference type="BioGRID" id="213992">
    <property type="interactions" value="28"/>
</dbReference>
<dbReference type="DIP" id="DIP-42642N"/>
<dbReference type="FunCoup" id="Q9JIF7">
    <property type="interactions" value="4279"/>
</dbReference>
<dbReference type="IntAct" id="Q9JIF7">
    <property type="interactions" value="6"/>
</dbReference>
<dbReference type="MINT" id="Q9JIF7"/>
<dbReference type="STRING" id="10090.ENSMUSP00000033012"/>
<dbReference type="GlyGen" id="Q9JIF7">
    <property type="glycosylation" value="3 sites, 2 N-linked glycans (2 sites), 1 O-linked glycan (1 site)"/>
</dbReference>
<dbReference type="iPTMnet" id="Q9JIF7"/>
<dbReference type="PhosphoSitePlus" id="Q9JIF7"/>
<dbReference type="SwissPalm" id="Q9JIF7"/>
<dbReference type="jPOST" id="Q9JIF7"/>
<dbReference type="PaxDb" id="10090-ENSMUSP00000033012"/>
<dbReference type="PeptideAtlas" id="Q9JIF7"/>
<dbReference type="ProteomicsDB" id="284084"/>
<dbReference type="Pumba" id="Q9JIF7"/>
<dbReference type="Antibodypedia" id="3231">
    <property type="antibodies" value="234 antibodies from 32 providers"/>
</dbReference>
<dbReference type="DNASU" id="70349"/>
<dbReference type="Ensembl" id="ENSMUST00000033012.9">
    <property type="protein sequence ID" value="ENSMUSP00000033012.8"/>
    <property type="gene ID" value="ENSMUSG00000030754.10"/>
</dbReference>
<dbReference type="GeneID" id="70349"/>
<dbReference type="KEGG" id="mmu:70349"/>
<dbReference type="UCSC" id="uc009jhx.1">
    <property type="organism name" value="mouse"/>
</dbReference>
<dbReference type="AGR" id="MGI:1917599"/>
<dbReference type="CTD" id="1315"/>
<dbReference type="MGI" id="MGI:1917599">
    <property type="gene designation" value="Copb1"/>
</dbReference>
<dbReference type="VEuPathDB" id="HostDB:ENSMUSG00000030754"/>
<dbReference type="eggNOG" id="KOG1058">
    <property type="taxonomic scope" value="Eukaryota"/>
</dbReference>
<dbReference type="GeneTree" id="ENSGT00390000005270"/>
<dbReference type="HOGENOM" id="CLU_006949_0_0_1"/>
<dbReference type="InParanoid" id="Q9JIF7"/>
<dbReference type="OMA" id="IYKNFDW"/>
<dbReference type="OrthoDB" id="10261439at2759"/>
<dbReference type="PhylomeDB" id="Q9JIF7"/>
<dbReference type="TreeFam" id="TF105737"/>
<dbReference type="Reactome" id="R-MMU-6798695">
    <property type="pathway name" value="Neutrophil degranulation"/>
</dbReference>
<dbReference type="Reactome" id="R-MMU-6807878">
    <property type="pathway name" value="COPI-mediated anterograde transport"/>
</dbReference>
<dbReference type="Reactome" id="R-MMU-6811434">
    <property type="pathway name" value="COPI-dependent Golgi-to-ER retrograde traffic"/>
</dbReference>
<dbReference type="BioGRID-ORCS" id="70349">
    <property type="hits" value="25 hits in 82 CRISPR screens"/>
</dbReference>
<dbReference type="ChiTaRS" id="Copb1">
    <property type="organism name" value="mouse"/>
</dbReference>
<dbReference type="EvolutionaryTrace" id="Q9JIF7"/>
<dbReference type="PRO" id="PR:Q9JIF7"/>
<dbReference type="Proteomes" id="UP000000589">
    <property type="component" value="Chromosome 7"/>
</dbReference>
<dbReference type="RNAct" id="Q9JIF7">
    <property type="molecule type" value="protein"/>
</dbReference>
<dbReference type="Bgee" id="ENSMUSG00000030754">
    <property type="expression patterns" value="Expressed in ureter smooth muscle and 277 other cell types or tissues"/>
</dbReference>
<dbReference type="GO" id="GO:0030126">
    <property type="term" value="C:COPI vesicle coat"/>
    <property type="evidence" value="ECO:0007669"/>
    <property type="project" value="Ensembl"/>
</dbReference>
<dbReference type="GO" id="GO:0030137">
    <property type="term" value="C:COPI-coated vesicle"/>
    <property type="evidence" value="ECO:0000314"/>
    <property type="project" value="MGI"/>
</dbReference>
<dbReference type="GO" id="GO:0005829">
    <property type="term" value="C:cytosol"/>
    <property type="evidence" value="ECO:0007669"/>
    <property type="project" value="Ensembl"/>
</dbReference>
<dbReference type="GO" id="GO:0005793">
    <property type="term" value="C:endoplasmic reticulum-Golgi intermediate compartment"/>
    <property type="evidence" value="ECO:0007669"/>
    <property type="project" value="UniProtKB-SubCell"/>
</dbReference>
<dbReference type="GO" id="GO:0005794">
    <property type="term" value="C:Golgi apparatus"/>
    <property type="evidence" value="ECO:0000314"/>
    <property type="project" value="MGI"/>
</dbReference>
<dbReference type="GO" id="GO:0000139">
    <property type="term" value="C:Golgi membrane"/>
    <property type="evidence" value="ECO:0007669"/>
    <property type="project" value="UniProtKB-SubCell"/>
</dbReference>
<dbReference type="GO" id="GO:0005886">
    <property type="term" value="C:plasma membrane"/>
    <property type="evidence" value="ECO:0007669"/>
    <property type="project" value="UniProtKB-SubCell"/>
</dbReference>
<dbReference type="GO" id="GO:0005198">
    <property type="term" value="F:structural molecule activity"/>
    <property type="evidence" value="ECO:0007669"/>
    <property type="project" value="InterPro"/>
</dbReference>
<dbReference type="GO" id="GO:0006891">
    <property type="term" value="P:intra-Golgi vesicle-mediated transport"/>
    <property type="evidence" value="ECO:0007669"/>
    <property type="project" value="Ensembl"/>
</dbReference>
<dbReference type="GO" id="GO:0006886">
    <property type="term" value="P:intracellular protein transport"/>
    <property type="evidence" value="ECO:0007669"/>
    <property type="project" value="InterPro"/>
</dbReference>
<dbReference type="Gene3D" id="1.25.10.10">
    <property type="entry name" value="Leucine-rich Repeat Variant"/>
    <property type="match status" value="1"/>
</dbReference>
<dbReference type="InterPro" id="IPR011989">
    <property type="entry name" value="ARM-like"/>
</dbReference>
<dbReference type="InterPro" id="IPR016024">
    <property type="entry name" value="ARM-type_fold"/>
</dbReference>
<dbReference type="InterPro" id="IPR002553">
    <property type="entry name" value="Clathrin/coatomer_adapt-like_N"/>
</dbReference>
<dbReference type="InterPro" id="IPR011710">
    <property type="entry name" value="Coatomer_bsu_C"/>
</dbReference>
<dbReference type="InterPro" id="IPR016460">
    <property type="entry name" value="COPB1"/>
</dbReference>
<dbReference type="InterPro" id="IPR029446">
    <property type="entry name" value="COPB1_appendage_platform_dom"/>
</dbReference>
<dbReference type="PANTHER" id="PTHR10635">
    <property type="entry name" value="COATOMER SUBUNIT BETA"/>
    <property type="match status" value="1"/>
</dbReference>
<dbReference type="PANTHER" id="PTHR10635:SF0">
    <property type="entry name" value="COATOMER SUBUNIT BETA"/>
    <property type="match status" value="1"/>
</dbReference>
<dbReference type="Pfam" id="PF01602">
    <property type="entry name" value="Adaptin_N"/>
    <property type="match status" value="1"/>
</dbReference>
<dbReference type="Pfam" id="PF07718">
    <property type="entry name" value="Coatamer_beta_C"/>
    <property type="match status" value="1"/>
</dbReference>
<dbReference type="Pfam" id="PF14806">
    <property type="entry name" value="Coatomer_b_Cpla"/>
    <property type="match status" value="1"/>
</dbReference>
<dbReference type="PIRSF" id="PIRSF005727">
    <property type="entry name" value="Coatomer_beta_subunit"/>
    <property type="match status" value="1"/>
</dbReference>
<dbReference type="SUPFAM" id="SSF48371">
    <property type="entry name" value="ARM repeat"/>
    <property type="match status" value="1"/>
</dbReference>
<gene>
    <name type="primary">Copb1</name>
    <name type="synonym">Copb</name>
</gene>
<protein>
    <recommendedName>
        <fullName>Coatomer subunit beta</fullName>
    </recommendedName>
    <alternativeName>
        <fullName>Beta-coat protein</fullName>
        <shortName>Beta-COP</shortName>
    </alternativeName>
</protein>
<evidence type="ECO:0000250" key="1"/>
<evidence type="ECO:0000250" key="2">
    <source>
        <dbReference type="UniProtKB" id="P23514"/>
    </source>
</evidence>
<evidence type="ECO:0000250" key="3">
    <source>
        <dbReference type="UniProtKB" id="P53618"/>
    </source>
</evidence>
<evidence type="ECO:0000269" key="4">
    <source>
    </source>
</evidence>
<evidence type="ECO:0000269" key="5">
    <source>
    </source>
</evidence>
<evidence type="ECO:0000269" key="6">
    <source>
    </source>
</evidence>
<evidence type="ECO:0000269" key="7">
    <source>
    </source>
</evidence>
<evidence type="ECO:0000269" key="8">
    <source>
    </source>
</evidence>
<evidence type="ECO:0000269" key="9">
    <source>
    </source>
</evidence>
<evidence type="ECO:0000305" key="10"/>
<evidence type="ECO:0007744" key="11">
    <source>
    </source>
</evidence>